<feature type="chain" id="PRO_1000020755" description="Glycerol kinase">
    <location>
        <begin position="1"/>
        <end position="504"/>
    </location>
</feature>
<feature type="binding site" evidence="1">
    <location>
        <position position="13"/>
    </location>
    <ligand>
        <name>ADP</name>
        <dbReference type="ChEBI" id="CHEBI:456216"/>
    </ligand>
</feature>
<feature type="binding site" evidence="1">
    <location>
        <position position="13"/>
    </location>
    <ligand>
        <name>ATP</name>
        <dbReference type="ChEBI" id="CHEBI:30616"/>
    </ligand>
</feature>
<feature type="binding site" evidence="1">
    <location>
        <position position="13"/>
    </location>
    <ligand>
        <name>sn-glycerol 3-phosphate</name>
        <dbReference type="ChEBI" id="CHEBI:57597"/>
    </ligand>
</feature>
<feature type="binding site" evidence="1">
    <location>
        <position position="14"/>
    </location>
    <ligand>
        <name>ATP</name>
        <dbReference type="ChEBI" id="CHEBI:30616"/>
    </ligand>
</feature>
<feature type="binding site" evidence="1">
    <location>
        <position position="15"/>
    </location>
    <ligand>
        <name>ATP</name>
        <dbReference type="ChEBI" id="CHEBI:30616"/>
    </ligand>
</feature>
<feature type="binding site" evidence="1">
    <location>
        <position position="17"/>
    </location>
    <ligand>
        <name>ADP</name>
        <dbReference type="ChEBI" id="CHEBI:456216"/>
    </ligand>
</feature>
<feature type="binding site" evidence="1">
    <location>
        <position position="83"/>
    </location>
    <ligand>
        <name>glycerol</name>
        <dbReference type="ChEBI" id="CHEBI:17754"/>
    </ligand>
</feature>
<feature type="binding site" evidence="1">
    <location>
        <position position="83"/>
    </location>
    <ligand>
        <name>sn-glycerol 3-phosphate</name>
        <dbReference type="ChEBI" id="CHEBI:57597"/>
    </ligand>
</feature>
<feature type="binding site" evidence="1">
    <location>
        <position position="84"/>
    </location>
    <ligand>
        <name>glycerol</name>
        <dbReference type="ChEBI" id="CHEBI:17754"/>
    </ligand>
</feature>
<feature type="binding site" evidence="1">
    <location>
        <position position="84"/>
    </location>
    <ligand>
        <name>sn-glycerol 3-phosphate</name>
        <dbReference type="ChEBI" id="CHEBI:57597"/>
    </ligand>
</feature>
<feature type="binding site" evidence="1">
    <location>
        <position position="135"/>
    </location>
    <ligand>
        <name>glycerol</name>
        <dbReference type="ChEBI" id="CHEBI:17754"/>
    </ligand>
</feature>
<feature type="binding site" evidence="1">
    <location>
        <position position="135"/>
    </location>
    <ligand>
        <name>sn-glycerol 3-phosphate</name>
        <dbReference type="ChEBI" id="CHEBI:57597"/>
    </ligand>
</feature>
<feature type="binding site" evidence="1">
    <location>
        <position position="245"/>
    </location>
    <ligand>
        <name>glycerol</name>
        <dbReference type="ChEBI" id="CHEBI:17754"/>
    </ligand>
</feature>
<feature type="binding site" evidence="1">
    <location>
        <position position="245"/>
    </location>
    <ligand>
        <name>sn-glycerol 3-phosphate</name>
        <dbReference type="ChEBI" id="CHEBI:57597"/>
    </ligand>
</feature>
<feature type="binding site" evidence="1">
    <location>
        <position position="246"/>
    </location>
    <ligand>
        <name>glycerol</name>
        <dbReference type="ChEBI" id="CHEBI:17754"/>
    </ligand>
</feature>
<feature type="binding site" evidence="1">
    <location>
        <position position="267"/>
    </location>
    <ligand>
        <name>ADP</name>
        <dbReference type="ChEBI" id="CHEBI:456216"/>
    </ligand>
</feature>
<feature type="binding site" evidence="1">
    <location>
        <position position="267"/>
    </location>
    <ligand>
        <name>ATP</name>
        <dbReference type="ChEBI" id="CHEBI:30616"/>
    </ligand>
</feature>
<feature type="binding site" evidence="1">
    <location>
        <position position="310"/>
    </location>
    <ligand>
        <name>ADP</name>
        <dbReference type="ChEBI" id="CHEBI:456216"/>
    </ligand>
</feature>
<feature type="binding site" evidence="1">
    <location>
        <position position="310"/>
    </location>
    <ligand>
        <name>ATP</name>
        <dbReference type="ChEBI" id="CHEBI:30616"/>
    </ligand>
</feature>
<feature type="binding site" evidence="1">
    <location>
        <position position="314"/>
    </location>
    <ligand>
        <name>ATP</name>
        <dbReference type="ChEBI" id="CHEBI:30616"/>
    </ligand>
</feature>
<feature type="binding site" evidence="1">
    <location>
        <position position="411"/>
    </location>
    <ligand>
        <name>ADP</name>
        <dbReference type="ChEBI" id="CHEBI:456216"/>
    </ligand>
</feature>
<feature type="binding site" evidence="1">
    <location>
        <position position="411"/>
    </location>
    <ligand>
        <name>ATP</name>
        <dbReference type="ChEBI" id="CHEBI:30616"/>
    </ligand>
</feature>
<feature type="binding site" evidence="1">
    <location>
        <position position="415"/>
    </location>
    <ligand>
        <name>ADP</name>
        <dbReference type="ChEBI" id="CHEBI:456216"/>
    </ligand>
</feature>
<feature type="modified residue" description="Phosphohistidine; by HPr" evidence="1">
    <location>
        <position position="231"/>
    </location>
</feature>
<organism>
    <name type="scientific">Pediococcus pentosaceus (strain ATCC 25745 / CCUG 21536 / LMG 10740 / 183-1w)</name>
    <dbReference type="NCBI Taxonomy" id="278197"/>
    <lineage>
        <taxon>Bacteria</taxon>
        <taxon>Bacillati</taxon>
        <taxon>Bacillota</taxon>
        <taxon>Bacilli</taxon>
        <taxon>Lactobacillales</taxon>
        <taxon>Lactobacillaceae</taxon>
        <taxon>Pediococcus</taxon>
    </lineage>
</organism>
<reference key="1">
    <citation type="journal article" date="2006" name="Proc. Natl. Acad. Sci. U.S.A.">
        <title>Comparative genomics of the lactic acid bacteria.</title>
        <authorList>
            <person name="Makarova K.S."/>
            <person name="Slesarev A."/>
            <person name="Wolf Y.I."/>
            <person name="Sorokin A."/>
            <person name="Mirkin B."/>
            <person name="Koonin E.V."/>
            <person name="Pavlov A."/>
            <person name="Pavlova N."/>
            <person name="Karamychev V."/>
            <person name="Polouchine N."/>
            <person name="Shakhova V."/>
            <person name="Grigoriev I."/>
            <person name="Lou Y."/>
            <person name="Rohksar D."/>
            <person name="Lucas S."/>
            <person name="Huang K."/>
            <person name="Goodstein D.M."/>
            <person name="Hawkins T."/>
            <person name="Plengvidhya V."/>
            <person name="Welker D."/>
            <person name="Hughes J."/>
            <person name="Goh Y."/>
            <person name="Benson A."/>
            <person name="Baldwin K."/>
            <person name="Lee J.-H."/>
            <person name="Diaz-Muniz I."/>
            <person name="Dosti B."/>
            <person name="Smeianov V."/>
            <person name="Wechter W."/>
            <person name="Barabote R."/>
            <person name="Lorca G."/>
            <person name="Altermann E."/>
            <person name="Barrangou R."/>
            <person name="Ganesan B."/>
            <person name="Xie Y."/>
            <person name="Rawsthorne H."/>
            <person name="Tamir D."/>
            <person name="Parker C."/>
            <person name="Breidt F."/>
            <person name="Broadbent J.R."/>
            <person name="Hutkins R."/>
            <person name="O'Sullivan D."/>
            <person name="Steele J."/>
            <person name="Unlu G."/>
            <person name="Saier M.H. Jr."/>
            <person name="Klaenhammer T."/>
            <person name="Richardson P."/>
            <person name="Kozyavkin S."/>
            <person name="Weimer B.C."/>
            <person name="Mills D.A."/>
        </authorList>
    </citation>
    <scope>NUCLEOTIDE SEQUENCE [LARGE SCALE GENOMIC DNA]</scope>
    <source>
        <strain>ATCC 25745 / CCUG 21536 / LMG 10740 / 183-1w</strain>
    </source>
</reference>
<dbReference type="EC" id="2.7.1.30" evidence="1"/>
<dbReference type="EMBL" id="CP000422">
    <property type="protein sequence ID" value="ABJ68644.1"/>
    <property type="molecule type" value="Genomic_DNA"/>
</dbReference>
<dbReference type="RefSeq" id="WP_002832953.1">
    <property type="nucleotide sequence ID" value="NC_008525.1"/>
</dbReference>
<dbReference type="SMR" id="Q03DS8"/>
<dbReference type="STRING" id="278197.PEPE_1623"/>
<dbReference type="GeneID" id="33062399"/>
<dbReference type="KEGG" id="ppe:PEPE_1623"/>
<dbReference type="eggNOG" id="COG0554">
    <property type="taxonomic scope" value="Bacteria"/>
</dbReference>
<dbReference type="HOGENOM" id="CLU_009281_2_3_9"/>
<dbReference type="OrthoDB" id="9805576at2"/>
<dbReference type="UniPathway" id="UPA00618">
    <property type="reaction ID" value="UER00672"/>
</dbReference>
<dbReference type="Proteomes" id="UP000000773">
    <property type="component" value="Chromosome"/>
</dbReference>
<dbReference type="GO" id="GO:0005829">
    <property type="term" value="C:cytosol"/>
    <property type="evidence" value="ECO:0007669"/>
    <property type="project" value="TreeGrafter"/>
</dbReference>
<dbReference type="GO" id="GO:0005524">
    <property type="term" value="F:ATP binding"/>
    <property type="evidence" value="ECO:0007669"/>
    <property type="project" value="UniProtKB-UniRule"/>
</dbReference>
<dbReference type="GO" id="GO:0004370">
    <property type="term" value="F:glycerol kinase activity"/>
    <property type="evidence" value="ECO:0000250"/>
    <property type="project" value="UniProtKB"/>
</dbReference>
<dbReference type="GO" id="GO:0019563">
    <property type="term" value="P:glycerol catabolic process"/>
    <property type="evidence" value="ECO:0007669"/>
    <property type="project" value="UniProtKB-UniRule"/>
</dbReference>
<dbReference type="GO" id="GO:0006071">
    <property type="term" value="P:glycerol metabolic process"/>
    <property type="evidence" value="ECO:0000250"/>
    <property type="project" value="UniProtKB"/>
</dbReference>
<dbReference type="GO" id="GO:0006072">
    <property type="term" value="P:glycerol-3-phosphate metabolic process"/>
    <property type="evidence" value="ECO:0007669"/>
    <property type="project" value="InterPro"/>
</dbReference>
<dbReference type="CDD" id="cd07786">
    <property type="entry name" value="FGGY_EcGK_like"/>
    <property type="match status" value="1"/>
</dbReference>
<dbReference type="FunFam" id="3.30.420.40:FF:000007">
    <property type="entry name" value="Glycerol kinase"/>
    <property type="match status" value="1"/>
</dbReference>
<dbReference type="FunFam" id="3.30.420.40:FF:000008">
    <property type="entry name" value="Glycerol kinase"/>
    <property type="match status" value="1"/>
</dbReference>
<dbReference type="Gene3D" id="3.30.420.40">
    <property type="match status" value="2"/>
</dbReference>
<dbReference type="HAMAP" id="MF_00186">
    <property type="entry name" value="Glycerol_kin"/>
    <property type="match status" value="1"/>
</dbReference>
<dbReference type="InterPro" id="IPR043129">
    <property type="entry name" value="ATPase_NBD"/>
</dbReference>
<dbReference type="InterPro" id="IPR000577">
    <property type="entry name" value="Carb_kinase_FGGY"/>
</dbReference>
<dbReference type="InterPro" id="IPR018483">
    <property type="entry name" value="Carb_kinase_FGGY_CS"/>
</dbReference>
<dbReference type="InterPro" id="IPR018485">
    <property type="entry name" value="FGGY_C"/>
</dbReference>
<dbReference type="InterPro" id="IPR018484">
    <property type="entry name" value="FGGY_N"/>
</dbReference>
<dbReference type="InterPro" id="IPR005999">
    <property type="entry name" value="Glycerol_kin"/>
</dbReference>
<dbReference type="NCBIfam" id="TIGR01311">
    <property type="entry name" value="glycerol_kin"/>
    <property type="match status" value="1"/>
</dbReference>
<dbReference type="NCBIfam" id="NF000756">
    <property type="entry name" value="PRK00047.1"/>
    <property type="match status" value="1"/>
</dbReference>
<dbReference type="PANTHER" id="PTHR10196:SF69">
    <property type="entry name" value="GLYCEROL KINASE"/>
    <property type="match status" value="1"/>
</dbReference>
<dbReference type="PANTHER" id="PTHR10196">
    <property type="entry name" value="SUGAR KINASE"/>
    <property type="match status" value="1"/>
</dbReference>
<dbReference type="Pfam" id="PF02782">
    <property type="entry name" value="FGGY_C"/>
    <property type="match status" value="1"/>
</dbReference>
<dbReference type="Pfam" id="PF00370">
    <property type="entry name" value="FGGY_N"/>
    <property type="match status" value="1"/>
</dbReference>
<dbReference type="PIRSF" id="PIRSF000538">
    <property type="entry name" value="GlpK"/>
    <property type="match status" value="1"/>
</dbReference>
<dbReference type="SUPFAM" id="SSF53067">
    <property type="entry name" value="Actin-like ATPase domain"/>
    <property type="match status" value="2"/>
</dbReference>
<dbReference type="PROSITE" id="PS00933">
    <property type="entry name" value="FGGY_KINASES_1"/>
    <property type="match status" value="1"/>
</dbReference>
<dbReference type="PROSITE" id="PS00445">
    <property type="entry name" value="FGGY_KINASES_2"/>
    <property type="match status" value="1"/>
</dbReference>
<name>GLPK_PEDPA</name>
<protein>
    <recommendedName>
        <fullName evidence="1">Glycerol kinase</fullName>
        <ecNumber evidence="1">2.7.1.30</ecNumber>
    </recommendedName>
    <alternativeName>
        <fullName evidence="1">ATP:glycerol 3-phosphotransferase</fullName>
    </alternativeName>
    <alternativeName>
        <fullName evidence="1">Glycerokinase</fullName>
        <shortName evidence="1">GK</shortName>
    </alternativeName>
</protein>
<accession>Q03DS8</accession>
<sequence>MADKYILAIDEGTTSTRTIIFDHAGNKMADAQREFPQYFPKPGWVEHNANEIWNAVLSTIANAFIESGIKPNQISGIGITNQRETTVIWDKKTGLPIYNAVVWQSRQTAEIAEQLVKDGYGDMIHQKTGLVTDAYFSATKIRWILDHVDGAQARAERGELLFGTIDTWLMWKLTDGDVHVTDYSNASRTMLYNIHKLEWDKEILALLNIPASMLPEVKPNSTIYGKTKDYHFYGSEVPISGMAGDQQAALFGQLAFEPGMVKNTYGTGAFTVMNTGEKPQLSDNNLLTTIGYGINGKVYYALEGSIFVAGSAIQWLRDGMKLFKKASESEAAAVASQNDNEVYVVPAFTGLGAPYWDPNARGSVFGITRGTTREDFIKATLQSLAYQSRDVIDTMKKDSGIDIPSIRVDGGASNNDYLMQFQSDILGIEIDRASDLETTALGAAFLAGLAVGFWKDLEDLKKEYKPGKVFKPKMSTDEREDLYTGWQEAVAATRQFKHRPRQSK</sequence>
<gene>
    <name evidence="1" type="primary">glpK</name>
    <name type="ordered locus">PEPE_1623</name>
</gene>
<keyword id="KW-0067">ATP-binding</keyword>
<keyword id="KW-0319">Glycerol metabolism</keyword>
<keyword id="KW-0418">Kinase</keyword>
<keyword id="KW-0547">Nucleotide-binding</keyword>
<keyword id="KW-0597">Phosphoprotein</keyword>
<keyword id="KW-0808">Transferase</keyword>
<comment type="function">
    <text evidence="1">Key enzyme in the regulation of glycerol uptake and metabolism. Catalyzes the phosphorylation of glycerol to yield sn-glycerol 3-phosphate.</text>
</comment>
<comment type="catalytic activity">
    <reaction evidence="1">
        <text>glycerol + ATP = sn-glycerol 3-phosphate + ADP + H(+)</text>
        <dbReference type="Rhea" id="RHEA:21644"/>
        <dbReference type="ChEBI" id="CHEBI:15378"/>
        <dbReference type="ChEBI" id="CHEBI:17754"/>
        <dbReference type="ChEBI" id="CHEBI:30616"/>
        <dbReference type="ChEBI" id="CHEBI:57597"/>
        <dbReference type="ChEBI" id="CHEBI:456216"/>
        <dbReference type="EC" id="2.7.1.30"/>
    </reaction>
</comment>
<comment type="activity regulation">
    <text evidence="1">Activated by phosphorylation and inhibited by fructose 1,6-bisphosphate (FBP).</text>
</comment>
<comment type="pathway">
    <text evidence="1">Polyol metabolism; glycerol degradation via glycerol kinase pathway; sn-glycerol 3-phosphate from glycerol: step 1/1.</text>
</comment>
<comment type="subunit">
    <text evidence="1">Homotetramer and homodimer (in equilibrium).</text>
</comment>
<comment type="PTM">
    <text evidence="1">The phosphoenolpyruvate-dependent sugar phosphotransferase system (PTS), including enzyme I, and histidine-containing protein (HPr) are required for the phosphorylation, which leads to the activation of the enzyme.</text>
</comment>
<comment type="similarity">
    <text evidence="1">Belongs to the FGGY kinase family.</text>
</comment>
<evidence type="ECO:0000255" key="1">
    <source>
        <dbReference type="HAMAP-Rule" id="MF_00186"/>
    </source>
</evidence>
<proteinExistence type="inferred from homology"/>